<proteinExistence type="inferred from homology"/>
<accession>C5B9M4</accession>
<sequence>MSEKYVVTWDVLQMHTRKLAARLLPAERWTGIIAVSRGGLVPAAILARELGIRHVDTVCISSYDHDNQRELRVLKCAEGDGEGFIVVDDLVDTGGTAQAIRDMYPKAHFVTIFAKPAGRPLVDDYVVDIPQNTWIEQPWDMGVSFVEPLSGR</sequence>
<organism>
    <name type="scientific">Edwardsiella ictaluri (strain 93-146)</name>
    <dbReference type="NCBI Taxonomy" id="634503"/>
    <lineage>
        <taxon>Bacteria</taxon>
        <taxon>Pseudomonadati</taxon>
        <taxon>Pseudomonadota</taxon>
        <taxon>Gammaproteobacteria</taxon>
        <taxon>Enterobacterales</taxon>
        <taxon>Hafniaceae</taxon>
        <taxon>Edwardsiella</taxon>
    </lineage>
</organism>
<evidence type="ECO:0000255" key="1">
    <source>
        <dbReference type="HAMAP-Rule" id="MF_01903"/>
    </source>
</evidence>
<name>XGPT_EDWI9</name>
<dbReference type="EC" id="2.4.2.-" evidence="1"/>
<dbReference type="EC" id="2.4.2.22" evidence="1"/>
<dbReference type="EMBL" id="CP001600">
    <property type="protein sequence ID" value="ACR68126.1"/>
    <property type="molecule type" value="Genomic_DNA"/>
</dbReference>
<dbReference type="RefSeq" id="WP_015870313.1">
    <property type="nucleotide sequence ID" value="NZ_CP169062.1"/>
</dbReference>
<dbReference type="SMR" id="C5B9M4"/>
<dbReference type="STRING" id="67780.B6E78_15070"/>
<dbReference type="GeneID" id="69537961"/>
<dbReference type="KEGG" id="eic:NT01EI_0912"/>
<dbReference type="PATRIC" id="fig|634503.3.peg.825"/>
<dbReference type="HOGENOM" id="CLU_080904_3_0_6"/>
<dbReference type="OrthoDB" id="9789690at2"/>
<dbReference type="UniPathway" id="UPA00602">
    <property type="reaction ID" value="UER00658"/>
</dbReference>
<dbReference type="UniPathway" id="UPA00909">
    <property type="reaction ID" value="UER00887"/>
</dbReference>
<dbReference type="Proteomes" id="UP000001485">
    <property type="component" value="Chromosome"/>
</dbReference>
<dbReference type="GO" id="GO:0005829">
    <property type="term" value="C:cytosol"/>
    <property type="evidence" value="ECO:0007669"/>
    <property type="project" value="TreeGrafter"/>
</dbReference>
<dbReference type="GO" id="GO:0005886">
    <property type="term" value="C:plasma membrane"/>
    <property type="evidence" value="ECO:0007669"/>
    <property type="project" value="UniProtKB-SubCell"/>
</dbReference>
<dbReference type="GO" id="GO:0052657">
    <property type="term" value="F:guanine phosphoribosyltransferase activity"/>
    <property type="evidence" value="ECO:0007669"/>
    <property type="project" value="RHEA"/>
</dbReference>
<dbReference type="GO" id="GO:0004422">
    <property type="term" value="F:hypoxanthine phosphoribosyltransferase activity"/>
    <property type="evidence" value="ECO:0007669"/>
    <property type="project" value="TreeGrafter"/>
</dbReference>
<dbReference type="GO" id="GO:0000287">
    <property type="term" value="F:magnesium ion binding"/>
    <property type="evidence" value="ECO:0007669"/>
    <property type="project" value="UniProtKB-UniRule"/>
</dbReference>
<dbReference type="GO" id="GO:0000310">
    <property type="term" value="F:xanthine phosphoribosyltransferase activity"/>
    <property type="evidence" value="ECO:0007669"/>
    <property type="project" value="UniProtKB-UniRule"/>
</dbReference>
<dbReference type="GO" id="GO:0032263">
    <property type="term" value="P:GMP salvage"/>
    <property type="evidence" value="ECO:0007669"/>
    <property type="project" value="UniProtKB-UniRule"/>
</dbReference>
<dbReference type="GO" id="GO:0032264">
    <property type="term" value="P:IMP salvage"/>
    <property type="evidence" value="ECO:0007669"/>
    <property type="project" value="TreeGrafter"/>
</dbReference>
<dbReference type="GO" id="GO:0006166">
    <property type="term" value="P:purine ribonucleoside salvage"/>
    <property type="evidence" value="ECO:0007669"/>
    <property type="project" value="UniProtKB-KW"/>
</dbReference>
<dbReference type="GO" id="GO:0032265">
    <property type="term" value="P:XMP salvage"/>
    <property type="evidence" value="ECO:0007669"/>
    <property type="project" value="UniProtKB-UniRule"/>
</dbReference>
<dbReference type="CDD" id="cd06223">
    <property type="entry name" value="PRTases_typeI"/>
    <property type="match status" value="1"/>
</dbReference>
<dbReference type="FunFam" id="3.40.50.2020:FF:000009">
    <property type="entry name" value="Xanthine phosphoribosyltransferase"/>
    <property type="match status" value="1"/>
</dbReference>
<dbReference type="Gene3D" id="3.40.50.2020">
    <property type="match status" value="1"/>
</dbReference>
<dbReference type="HAMAP" id="MF_01903">
    <property type="entry name" value="XGPRT"/>
    <property type="match status" value="1"/>
</dbReference>
<dbReference type="InterPro" id="IPR000836">
    <property type="entry name" value="PRibTrfase_dom"/>
</dbReference>
<dbReference type="InterPro" id="IPR029057">
    <property type="entry name" value="PRTase-like"/>
</dbReference>
<dbReference type="InterPro" id="IPR023747">
    <property type="entry name" value="Xanthine_Guanine_PRibTrfase"/>
</dbReference>
<dbReference type="NCBIfam" id="NF006613">
    <property type="entry name" value="PRK09177.1"/>
    <property type="match status" value="1"/>
</dbReference>
<dbReference type="PANTHER" id="PTHR39563">
    <property type="entry name" value="XANTHINE PHOSPHORIBOSYLTRANSFERASE"/>
    <property type="match status" value="1"/>
</dbReference>
<dbReference type="PANTHER" id="PTHR39563:SF1">
    <property type="entry name" value="XANTHINE-GUANINE PHOSPHORIBOSYLTRANSFERASE"/>
    <property type="match status" value="1"/>
</dbReference>
<dbReference type="Pfam" id="PF00156">
    <property type="entry name" value="Pribosyltran"/>
    <property type="match status" value="1"/>
</dbReference>
<dbReference type="SUPFAM" id="SSF53271">
    <property type="entry name" value="PRTase-like"/>
    <property type="match status" value="1"/>
</dbReference>
<dbReference type="PROSITE" id="PS00103">
    <property type="entry name" value="PUR_PYR_PR_TRANSFER"/>
    <property type="match status" value="1"/>
</dbReference>
<keyword id="KW-0997">Cell inner membrane</keyword>
<keyword id="KW-1003">Cell membrane</keyword>
<keyword id="KW-0328">Glycosyltransferase</keyword>
<keyword id="KW-0460">Magnesium</keyword>
<keyword id="KW-0472">Membrane</keyword>
<keyword id="KW-0479">Metal-binding</keyword>
<keyword id="KW-0660">Purine salvage</keyword>
<keyword id="KW-0808">Transferase</keyword>
<reference key="1">
    <citation type="submission" date="2009-03" db="EMBL/GenBank/DDBJ databases">
        <title>Complete genome sequence of Edwardsiella ictaluri 93-146.</title>
        <authorList>
            <person name="Williams M.L."/>
            <person name="Gillaspy A.F."/>
            <person name="Dyer D.W."/>
            <person name="Thune R.L."/>
            <person name="Waldbieser G.C."/>
            <person name="Schuster S.C."/>
            <person name="Gipson J."/>
            <person name="Zaitshik J."/>
            <person name="Landry C."/>
            <person name="Lawrence M.L."/>
        </authorList>
    </citation>
    <scope>NUCLEOTIDE SEQUENCE [LARGE SCALE GENOMIC DNA]</scope>
    <source>
        <strain>93-146</strain>
    </source>
</reference>
<protein>
    <recommendedName>
        <fullName evidence="1">Xanthine-guanine phosphoribosyltransferase</fullName>
        <shortName evidence="1">XGPRT</shortName>
        <ecNumber evidence="1">2.4.2.-</ecNumber>
        <ecNumber evidence="1">2.4.2.22</ecNumber>
    </recommendedName>
    <alternativeName>
        <fullName evidence="1">Xanthine phosphoribosyltransferase</fullName>
    </alternativeName>
</protein>
<comment type="function">
    <text evidence="1">Purine salvage pathway enzyme that catalyzes the transfer of the ribosyl-5-phosphate group from 5-phospho-alpha-D-ribose 1-diphosphate (PRPP) to the N9 position of the 6-oxopurines guanine and xanthine to form the corresponding ribonucleotides GMP (guanosine 5'-monophosphate) and XMP (xanthosine 5'-monophosphate), with the release of PPi. To a lesser extent, also acts on hypoxanthine.</text>
</comment>
<comment type="catalytic activity">
    <reaction evidence="1">
        <text>GMP + diphosphate = guanine + 5-phospho-alpha-D-ribose 1-diphosphate</text>
        <dbReference type="Rhea" id="RHEA:25424"/>
        <dbReference type="ChEBI" id="CHEBI:16235"/>
        <dbReference type="ChEBI" id="CHEBI:33019"/>
        <dbReference type="ChEBI" id="CHEBI:58017"/>
        <dbReference type="ChEBI" id="CHEBI:58115"/>
    </reaction>
    <physiologicalReaction direction="right-to-left" evidence="1">
        <dbReference type="Rhea" id="RHEA:25426"/>
    </physiologicalReaction>
</comment>
<comment type="catalytic activity">
    <reaction evidence="1">
        <text>XMP + diphosphate = xanthine + 5-phospho-alpha-D-ribose 1-diphosphate</text>
        <dbReference type="Rhea" id="RHEA:10800"/>
        <dbReference type="ChEBI" id="CHEBI:17712"/>
        <dbReference type="ChEBI" id="CHEBI:33019"/>
        <dbReference type="ChEBI" id="CHEBI:57464"/>
        <dbReference type="ChEBI" id="CHEBI:58017"/>
        <dbReference type="EC" id="2.4.2.22"/>
    </reaction>
    <physiologicalReaction direction="right-to-left" evidence="1">
        <dbReference type="Rhea" id="RHEA:10802"/>
    </physiologicalReaction>
</comment>
<comment type="catalytic activity">
    <reaction evidence="1">
        <text>IMP + diphosphate = hypoxanthine + 5-phospho-alpha-D-ribose 1-diphosphate</text>
        <dbReference type="Rhea" id="RHEA:17973"/>
        <dbReference type="ChEBI" id="CHEBI:17368"/>
        <dbReference type="ChEBI" id="CHEBI:33019"/>
        <dbReference type="ChEBI" id="CHEBI:58017"/>
        <dbReference type="ChEBI" id="CHEBI:58053"/>
    </reaction>
    <physiologicalReaction direction="right-to-left" evidence="1">
        <dbReference type="Rhea" id="RHEA:17975"/>
    </physiologicalReaction>
</comment>
<comment type="cofactor">
    <cofactor evidence="1">
        <name>Mg(2+)</name>
        <dbReference type="ChEBI" id="CHEBI:18420"/>
    </cofactor>
</comment>
<comment type="pathway">
    <text evidence="1">Purine metabolism; GMP biosynthesis via salvage pathway; GMP from guanine: step 1/1.</text>
</comment>
<comment type="pathway">
    <text evidence="1">Purine metabolism; XMP biosynthesis via salvage pathway; XMP from xanthine: step 1/1.</text>
</comment>
<comment type="subunit">
    <text evidence="1">Homotetramer.</text>
</comment>
<comment type="subcellular location">
    <subcellularLocation>
        <location evidence="1">Cell inner membrane</location>
        <topology evidence="1">Peripheral membrane protein</topology>
    </subcellularLocation>
</comment>
<comment type="similarity">
    <text evidence="1">Belongs to the purine/pyrimidine phosphoribosyltransferase family. XGPT subfamily.</text>
</comment>
<gene>
    <name evidence="1" type="primary">gpt</name>
    <name type="ordered locus">NT01EI_0912</name>
</gene>
<feature type="chain" id="PRO_1000216169" description="Xanthine-guanine phosphoribosyltransferase">
    <location>
        <begin position="1"/>
        <end position="152"/>
    </location>
</feature>
<feature type="binding site" evidence="1">
    <location>
        <begin position="37"/>
        <end position="38"/>
    </location>
    <ligand>
        <name>5-phospho-alpha-D-ribose 1-diphosphate</name>
        <dbReference type="ChEBI" id="CHEBI:58017"/>
    </ligand>
</feature>
<feature type="binding site" evidence="1">
    <location>
        <position position="69"/>
    </location>
    <ligand>
        <name>5-phospho-alpha-D-ribose 1-diphosphate</name>
        <dbReference type="ChEBI" id="CHEBI:58017"/>
    </ligand>
</feature>
<feature type="binding site" evidence="1">
    <location>
        <position position="69"/>
    </location>
    <ligand>
        <name>GMP</name>
        <dbReference type="ChEBI" id="CHEBI:58115"/>
    </ligand>
</feature>
<feature type="binding site" evidence="1">
    <location>
        <begin position="88"/>
        <end position="96"/>
    </location>
    <ligand>
        <name>5-phospho-alpha-D-ribose 1-diphosphate</name>
        <dbReference type="ChEBI" id="CHEBI:58017"/>
    </ligand>
</feature>
<feature type="binding site" evidence="1">
    <location>
        <position position="89"/>
    </location>
    <ligand>
        <name>Mg(2+)</name>
        <dbReference type="ChEBI" id="CHEBI:18420"/>
    </ligand>
</feature>
<feature type="binding site" evidence="1">
    <location>
        <begin position="92"/>
        <end position="96"/>
    </location>
    <ligand>
        <name>GMP</name>
        <dbReference type="ChEBI" id="CHEBI:58115"/>
    </ligand>
</feature>
<feature type="binding site" evidence="1">
    <location>
        <position position="92"/>
    </location>
    <ligand>
        <name>guanine</name>
        <dbReference type="ChEBI" id="CHEBI:16235"/>
    </ligand>
</feature>
<feature type="binding site" evidence="1">
    <location>
        <position position="92"/>
    </location>
    <ligand>
        <name>xanthine</name>
        <dbReference type="ChEBI" id="CHEBI:17712"/>
    </ligand>
</feature>
<feature type="binding site" evidence="1">
    <location>
        <begin position="134"/>
        <end position="135"/>
    </location>
    <ligand>
        <name>GMP</name>
        <dbReference type="ChEBI" id="CHEBI:58115"/>
    </ligand>
</feature>
<feature type="binding site" evidence="1">
    <location>
        <position position="135"/>
    </location>
    <ligand>
        <name>guanine</name>
        <dbReference type="ChEBI" id="CHEBI:16235"/>
    </ligand>
</feature>
<feature type="binding site" evidence="1">
    <location>
        <position position="135"/>
    </location>
    <ligand>
        <name>xanthine</name>
        <dbReference type="ChEBI" id="CHEBI:17712"/>
    </ligand>
</feature>